<name>I20L2_MOUSE</name>
<feature type="chain" id="PRO_0000315280" description="Interferon-stimulated 20 kDa exonuclease-like 2">
    <location>
        <begin position="1"/>
        <end position="368"/>
    </location>
</feature>
<feature type="domain" description="Exonuclease">
    <location>
        <begin position="194"/>
        <end position="368"/>
    </location>
</feature>
<feature type="region of interest" description="Disordered" evidence="2">
    <location>
        <begin position="33"/>
        <end position="107"/>
    </location>
</feature>
<feature type="region of interest" description="Disordered" evidence="2">
    <location>
        <begin position="127"/>
        <end position="187"/>
    </location>
</feature>
<feature type="compositionally biased region" description="Polar residues" evidence="2">
    <location>
        <begin position="42"/>
        <end position="54"/>
    </location>
</feature>
<feature type="compositionally biased region" description="Basic and acidic residues" evidence="2">
    <location>
        <begin position="77"/>
        <end position="96"/>
    </location>
</feature>
<feature type="compositionally biased region" description="Basic residues" evidence="2">
    <location>
        <begin position="131"/>
        <end position="145"/>
    </location>
</feature>
<feature type="sequence conflict" description="In Ref. 1; BAE33533." evidence="3" ref="1">
    <original>K</original>
    <variation>KK</variation>
    <location>
        <position position="77"/>
    </location>
</feature>
<feature type="sequence conflict" description="In Ref. 1; BAC35519." evidence="3" ref="1">
    <location>
        <position position="79"/>
    </location>
</feature>
<feature type="sequence conflict" description="In Ref. 1; BAC35519 and 2; AAH98326." evidence="3" ref="1 2">
    <original>R</original>
    <variation>Q</variation>
    <location>
        <position position="90"/>
    </location>
</feature>
<proteinExistence type="evidence at protein level"/>
<reference key="1">
    <citation type="journal article" date="2005" name="Science">
        <title>The transcriptional landscape of the mammalian genome.</title>
        <authorList>
            <person name="Carninci P."/>
            <person name="Kasukawa T."/>
            <person name="Katayama S."/>
            <person name="Gough J."/>
            <person name="Frith M.C."/>
            <person name="Maeda N."/>
            <person name="Oyama R."/>
            <person name="Ravasi T."/>
            <person name="Lenhard B."/>
            <person name="Wells C."/>
            <person name="Kodzius R."/>
            <person name="Shimokawa K."/>
            <person name="Bajic V.B."/>
            <person name="Brenner S.E."/>
            <person name="Batalov S."/>
            <person name="Forrest A.R."/>
            <person name="Zavolan M."/>
            <person name="Davis M.J."/>
            <person name="Wilming L.G."/>
            <person name="Aidinis V."/>
            <person name="Allen J.E."/>
            <person name="Ambesi-Impiombato A."/>
            <person name="Apweiler R."/>
            <person name="Aturaliya R.N."/>
            <person name="Bailey T.L."/>
            <person name="Bansal M."/>
            <person name="Baxter L."/>
            <person name="Beisel K.W."/>
            <person name="Bersano T."/>
            <person name="Bono H."/>
            <person name="Chalk A.M."/>
            <person name="Chiu K.P."/>
            <person name="Choudhary V."/>
            <person name="Christoffels A."/>
            <person name="Clutterbuck D.R."/>
            <person name="Crowe M.L."/>
            <person name="Dalla E."/>
            <person name="Dalrymple B.P."/>
            <person name="de Bono B."/>
            <person name="Della Gatta G."/>
            <person name="di Bernardo D."/>
            <person name="Down T."/>
            <person name="Engstrom P."/>
            <person name="Fagiolini M."/>
            <person name="Faulkner G."/>
            <person name="Fletcher C.F."/>
            <person name="Fukushima T."/>
            <person name="Furuno M."/>
            <person name="Futaki S."/>
            <person name="Gariboldi M."/>
            <person name="Georgii-Hemming P."/>
            <person name="Gingeras T.R."/>
            <person name="Gojobori T."/>
            <person name="Green R.E."/>
            <person name="Gustincich S."/>
            <person name="Harbers M."/>
            <person name="Hayashi Y."/>
            <person name="Hensch T.K."/>
            <person name="Hirokawa N."/>
            <person name="Hill D."/>
            <person name="Huminiecki L."/>
            <person name="Iacono M."/>
            <person name="Ikeo K."/>
            <person name="Iwama A."/>
            <person name="Ishikawa T."/>
            <person name="Jakt M."/>
            <person name="Kanapin A."/>
            <person name="Katoh M."/>
            <person name="Kawasawa Y."/>
            <person name="Kelso J."/>
            <person name="Kitamura H."/>
            <person name="Kitano H."/>
            <person name="Kollias G."/>
            <person name="Krishnan S.P."/>
            <person name="Kruger A."/>
            <person name="Kummerfeld S.K."/>
            <person name="Kurochkin I.V."/>
            <person name="Lareau L.F."/>
            <person name="Lazarevic D."/>
            <person name="Lipovich L."/>
            <person name="Liu J."/>
            <person name="Liuni S."/>
            <person name="McWilliam S."/>
            <person name="Madan Babu M."/>
            <person name="Madera M."/>
            <person name="Marchionni L."/>
            <person name="Matsuda H."/>
            <person name="Matsuzawa S."/>
            <person name="Miki H."/>
            <person name="Mignone F."/>
            <person name="Miyake S."/>
            <person name="Morris K."/>
            <person name="Mottagui-Tabar S."/>
            <person name="Mulder N."/>
            <person name="Nakano N."/>
            <person name="Nakauchi H."/>
            <person name="Ng P."/>
            <person name="Nilsson R."/>
            <person name="Nishiguchi S."/>
            <person name="Nishikawa S."/>
            <person name="Nori F."/>
            <person name="Ohara O."/>
            <person name="Okazaki Y."/>
            <person name="Orlando V."/>
            <person name="Pang K.C."/>
            <person name="Pavan W.J."/>
            <person name="Pavesi G."/>
            <person name="Pesole G."/>
            <person name="Petrovsky N."/>
            <person name="Piazza S."/>
            <person name="Reed J."/>
            <person name="Reid J.F."/>
            <person name="Ring B.Z."/>
            <person name="Ringwald M."/>
            <person name="Rost B."/>
            <person name="Ruan Y."/>
            <person name="Salzberg S.L."/>
            <person name="Sandelin A."/>
            <person name="Schneider C."/>
            <person name="Schoenbach C."/>
            <person name="Sekiguchi K."/>
            <person name="Semple C.A."/>
            <person name="Seno S."/>
            <person name="Sessa L."/>
            <person name="Sheng Y."/>
            <person name="Shibata Y."/>
            <person name="Shimada H."/>
            <person name="Shimada K."/>
            <person name="Silva D."/>
            <person name="Sinclair B."/>
            <person name="Sperling S."/>
            <person name="Stupka E."/>
            <person name="Sugiura K."/>
            <person name="Sultana R."/>
            <person name="Takenaka Y."/>
            <person name="Taki K."/>
            <person name="Tammoja K."/>
            <person name="Tan S.L."/>
            <person name="Tang S."/>
            <person name="Taylor M.S."/>
            <person name="Tegner J."/>
            <person name="Teichmann S.A."/>
            <person name="Ueda H.R."/>
            <person name="van Nimwegen E."/>
            <person name="Verardo R."/>
            <person name="Wei C.L."/>
            <person name="Yagi K."/>
            <person name="Yamanishi H."/>
            <person name="Zabarovsky E."/>
            <person name="Zhu S."/>
            <person name="Zimmer A."/>
            <person name="Hide W."/>
            <person name="Bult C."/>
            <person name="Grimmond S.M."/>
            <person name="Teasdale R.D."/>
            <person name="Liu E.T."/>
            <person name="Brusic V."/>
            <person name="Quackenbush J."/>
            <person name="Wahlestedt C."/>
            <person name="Mattick J.S."/>
            <person name="Hume D.A."/>
            <person name="Kai C."/>
            <person name="Sasaki D."/>
            <person name="Tomaru Y."/>
            <person name="Fukuda S."/>
            <person name="Kanamori-Katayama M."/>
            <person name="Suzuki M."/>
            <person name="Aoki J."/>
            <person name="Arakawa T."/>
            <person name="Iida J."/>
            <person name="Imamura K."/>
            <person name="Itoh M."/>
            <person name="Kato T."/>
            <person name="Kawaji H."/>
            <person name="Kawagashira N."/>
            <person name="Kawashima T."/>
            <person name="Kojima M."/>
            <person name="Kondo S."/>
            <person name="Konno H."/>
            <person name="Nakano K."/>
            <person name="Ninomiya N."/>
            <person name="Nishio T."/>
            <person name="Okada M."/>
            <person name="Plessy C."/>
            <person name="Shibata K."/>
            <person name="Shiraki T."/>
            <person name="Suzuki S."/>
            <person name="Tagami M."/>
            <person name="Waki K."/>
            <person name="Watahiki A."/>
            <person name="Okamura-Oho Y."/>
            <person name="Suzuki H."/>
            <person name="Kawai J."/>
            <person name="Hayashizaki Y."/>
        </authorList>
    </citation>
    <scope>NUCLEOTIDE SEQUENCE [LARGE SCALE MRNA]</scope>
    <source>
        <strain>C57BL/6J</strain>
        <strain>NOD</strain>
        <tissue>Eye</tissue>
        <tissue>Spleen</tissue>
    </source>
</reference>
<reference key="2">
    <citation type="journal article" date="2004" name="Genome Res.">
        <title>The status, quality, and expansion of the NIH full-length cDNA project: the Mammalian Gene Collection (MGC).</title>
        <authorList>
            <consortium name="The MGC Project Team"/>
        </authorList>
    </citation>
    <scope>NUCLEOTIDE SEQUENCE [LARGE SCALE MRNA]</scope>
    <source>
        <strain>C57BL/6J</strain>
        <tissue>Brain</tissue>
    </source>
</reference>
<reference key="3">
    <citation type="journal article" date="2010" name="Cell">
        <title>A tissue-specific atlas of mouse protein phosphorylation and expression.</title>
        <authorList>
            <person name="Huttlin E.L."/>
            <person name="Jedrychowski M.P."/>
            <person name="Elias J.E."/>
            <person name="Goswami T."/>
            <person name="Rad R."/>
            <person name="Beausoleil S.A."/>
            <person name="Villen J."/>
            <person name="Haas W."/>
            <person name="Sowa M.E."/>
            <person name="Gygi S.P."/>
        </authorList>
    </citation>
    <scope>IDENTIFICATION BY MASS SPECTROMETRY [LARGE SCALE ANALYSIS]</scope>
    <source>
        <tissue>Spleen</tissue>
    </source>
</reference>
<sequence>MSTILLNLDFGQPSKKAFGGNAKHQRFVKKRRFLEQKGFLNKKNQPPNKVSKLNSEPPKKGETSRVDGILKILPCPKKKEAAASKRDSERSKDKKAPLSWLTPAPSKKTASVVSKIDLLGEFQSALPKTKSTQKKGSKKKSLKKKIATENSTQAQSKDKGSKKKPLKKNAVPNSTQARSEDKCPTVPQNLPGKMVAIDCEMVGTGPKGRVSSLARCSIVNYNGDVLYDEYVLPPCYIVNYRTRWSGIRKCHMVNATPFKTARSQILKILSGKVVIGHAIHNDYKALQYFHPKSLTRDTSRIPLLNRKADCPENVTLSLKHLTKKLLSRDIQVGNTGHSSVEDAQATMELYKLVEVEWEQHLAQNPPEN</sequence>
<protein>
    <recommendedName>
        <fullName>Interferon-stimulated 20 kDa exonuclease-like 2</fullName>
        <ecNumber>3.1.-.-</ecNumber>
    </recommendedName>
</protein>
<comment type="function">
    <text evidence="1">3'-&gt; 5'-exoribonuclease involved in ribosome biogenesis in the processing of the 12S pre-rRNA. Displays a strong specificity for a 3'-end containing a free hydroxyl group.</text>
</comment>
<comment type="subcellular location">
    <subcellularLocation>
        <location evidence="1">Nucleus</location>
        <location evidence="1">Nucleolus</location>
    </subcellularLocation>
</comment>
<comment type="sequence caution" evidence="3">
    <conflict type="miscellaneous discrepancy">
        <sequence resource="EMBL-CDS" id="AAH98326"/>
    </conflict>
    <text>Contaminating sequence. Sequence of unknown origin.</text>
</comment>
<gene>
    <name type="primary">Isg20l2</name>
</gene>
<dbReference type="EC" id="3.1.-.-"/>
<dbReference type="EMBL" id="AK053778">
    <property type="protein sequence ID" value="BAC35519.1"/>
    <property type="molecule type" value="mRNA"/>
</dbReference>
<dbReference type="EMBL" id="AK155979">
    <property type="protein sequence ID" value="BAE33533.1"/>
    <property type="molecule type" value="mRNA"/>
</dbReference>
<dbReference type="EMBL" id="BC098326">
    <property type="protein sequence ID" value="AAH98326.1"/>
    <property type="status" value="ALT_SEQ"/>
    <property type="molecule type" value="mRNA"/>
</dbReference>
<dbReference type="CCDS" id="CCDS17459.1"/>
<dbReference type="RefSeq" id="NP_808331.1">
    <property type="nucleotide sequence ID" value="NM_177663.4"/>
</dbReference>
<dbReference type="SMR" id="Q3U1G5"/>
<dbReference type="BioGRID" id="230851">
    <property type="interactions" value="17"/>
</dbReference>
<dbReference type="FunCoup" id="Q3U1G5">
    <property type="interactions" value="2926"/>
</dbReference>
<dbReference type="STRING" id="10090.ENSMUSP00000059783"/>
<dbReference type="GlyGen" id="Q3U1G5">
    <property type="glycosylation" value="1 site, 1 O-linked glycan (1 site)"/>
</dbReference>
<dbReference type="iPTMnet" id="Q3U1G5"/>
<dbReference type="PhosphoSitePlus" id="Q3U1G5"/>
<dbReference type="jPOST" id="Q3U1G5"/>
<dbReference type="PaxDb" id="10090-ENSMUSP00000059783"/>
<dbReference type="PeptideAtlas" id="Q3U1G5"/>
<dbReference type="ProteomicsDB" id="267031"/>
<dbReference type="Pumba" id="Q3U1G5"/>
<dbReference type="DNASU" id="229504"/>
<dbReference type="GeneID" id="229504"/>
<dbReference type="KEGG" id="mmu:229504"/>
<dbReference type="UCSC" id="uc008ptj.1">
    <property type="organism name" value="mouse"/>
</dbReference>
<dbReference type="AGR" id="MGI:2140076"/>
<dbReference type="CTD" id="81875"/>
<dbReference type="MGI" id="MGI:2140076">
    <property type="gene designation" value="Isg20l2"/>
</dbReference>
<dbReference type="eggNOG" id="KOG2249">
    <property type="taxonomic scope" value="Eukaryota"/>
</dbReference>
<dbReference type="InParanoid" id="Q3U1G5"/>
<dbReference type="OrthoDB" id="16516at2759"/>
<dbReference type="PhylomeDB" id="Q3U1G5"/>
<dbReference type="TreeFam" id="TF354340"/>
<dbReference type="Reactome" id="R-MMU-6791226">
    <property type="pathway name" value="Major pathway of rRNA processing in the nucleolus and cytosol"/>
</dbReference>
<dbReference type="BioGRID-ORCS" id="229504">
    <property type="hits" value="23 hits in 76 CRISPR screens"/>
</dbReference>
<dbReference type="ChiTaRS" id="Isg20l2">
    <property type="organism name" value="mouse"/>
</dbReference>
<dbReference type="PRO" id="PR:Q3U1G5"/>
<dbReference type="Proteomes" id="UP000000589">
    <property type="component" value="Unplaced"/>
</dbReference>
<dbReference type="RNAct" id="Q3U1G5">
    <property type="molecule type" value="protein"/>
</dbReference>
<dbReference type="GO" id="GO:0005730">
    <property type="term" value="C:nucleolus"/>
    <property type="evidence" value="ECO:0007669"/>
    <property type="project" value="UniProtKB-SubCell"/>
</dbReference>
<dbReference type="GO" id="GO:0000175">
    <property type="term" value="F:3'-5'-RNA exonuclease activity"/>
    <property type="evidence" value="ECO:0007669"/>
    <property type="project" value="InterPro"/>
</dbReference>
<dbReference type="GO" id="GO:0003676">
    <property type="term" value="F:nucleic acid binding"/>
    <property type="evidence" value="ECO:0007669"/>
    <property type="project" value="InterPro"/>
</dbReference>
<dbReference type="GO" id="GO:0042254">
    <property type="term" value="P:ribosome biogenesis"/>
    <property type="evidence" value="ECO:0007669"/>
    <property type="project" value="UniProtKB-KW"/>
</dbReference>
<dbReference type="CDD" id="cd06149">
    <property type="entry name" value="ISG20"/>
    <property type="match status" value="1"/>
</dbReference>
<dbReference type="FunFam" id="3.30.420.10:FF:000007">
    <property type="entry name" value="Interferon-stimulated exonuclease gene 20"/>
    <property type="match status" value="1"/>
</dbReference>
<dbReference type="Gene3D" id="3.30.420.10">
    <property type="entry name" value="Ribonuclease H-like superfamily/Ribonuclease H"/>
    <property type="match status" value="1"/>
</dbReference>
<dbReference type="InterPro" id="IPR013520">
    <property type="entry name" value="Exonuclease_RNaseT/DNA_pol3"/>
</dbReference>
<dbReference type="InterPro" id="IPR037433">
    <property type="entry name" value="ISG20_DEDDh"/>
</dbReference>
<dbReference type="InterPro" id="IPR047021">
    <property type="entry name" value="REXO1/3/4-like"/>
</dbReference>
<dbReference type="InterPro" id="IPR012337">
    <property type="entry name" value="RNaseH-like_sf"/>
</dbReference>
<dbReference type="InterPro" id="IPR036397">
    <property type="entry name" value="RNaseH_sf"/>
</dbReference>
<dbReference type="PANTHER" id="PTHR12801:SF78">
    <property type="entry name" value="INTERFERON-STIMULATED 20 KDA EXONUCLEASE-LIKE 2"/>
    <property type="match status" value="1"/>
</dbReference>
<dbReference type="PANTHER" id="PTHR12801">
    <property type="entry name" value="RNA EXONUCLEASE REXO1 / RECO3 FAMILY MEMBER-RELATED"/>
    <property type="match status" value="1"/>
</dbReference>
<dbReference type="Pfam" id="PF00929">
    <property type="entry name" value="RNase_T"/>
    <property type="match status" value="1"/>
</dbReference>
<dbReference type="SMART" id="SM00479">
    <property type="entry name" value="EXOIII"/>
    <property type="match status" value="1"/>
</dbReference>
<dbReference type="SUPFAM" id="SSF53098">
    <property type="entry name" value="Ribonuclease H-like"/>
    <property type="match status" value="1"/>
</dbReference>
<accession>Q3U1G5</accession>
<accession>Q4KMV7</accession>
<accession>Q8BKA9</accession>
<evidence type="ECO:0000250" key="1"/>
<evidence type="ECO:0000256" key="2">
    <source>
        <dbReference type="SAM" id="MobiDB-lite"/>
    </source>
</evidence>
<evidence type="ECO:0000305" key="3"/>
<keyword id="KW-0269">Exonuclease</keyword>
<keyword id="KW-0378">Hydrolase</keyword>
<keyword id="KW-0540">Nuclease</keyword>
<keyword id="KW-0539">Nucleus</keyword>
<keyword id="KW-1185">Reference proteome</keyword>
<keyword id="KW-0690">Ribosome biogenesis</keyword>
<organism>
    <name type="scientific">Mus musculus</name>
    <name type="common">Mouse</name>
    <dbReference type="NCBI Taxonomy" id="10090"/>
    <lineage>
        <taxon>Eukaryota</taxon>
        <taxon>Metazoa</taxon>
        <taxon>Chordata</taxon>
        <taxon>Craniata</taxon>
        <taxon>Vertebrata</taxon>
        <taxon>Euteleostomi</taxon>
        <taxon>Mammalia</taxon>
        <taxon>Eutheria</taxon>
        <taxon>Euarchontoglires</taxon>
        <taxon>Glires</taxon>
        <taxon>Rodentia</taxon>
        <taxon>Myomorpha</taxon>
        <taxon>Muroidea</taxon>
        <taxon>Muridae</taxon>
        <taxon>Murinae</taxon>
        <taxon>Mus</taxon>
        <taxon>Mus</taxon>
    </lineage>
</organism>